<keyword id="KW-0165">Cleavage on pair of basic residues</keyword>
<keyword id="KW-1015">Disulfide bond</keyword>
<keyword id="KW-0245">EGF-like domain</keyword>
<keyword id="KW-0325">Glycoprotein</keyword>
<keyword id="KW-0378">Hydrolase</keyword>
<keyword id="KW-0420">Kringle</keyword>
<keyword id="KW-0617">Plasminogen activation</keyword>
<keyword id="KW-0645">Protease</keyword>
<keyword id="KW-1185">Reference proteome</keyword>
<keyword id="KW-0677">Repeat</keyword>
<keyword id="KW-0964">Secreted</keyword>
<keyword id="KW-0720">Serine protease</keyword>
<keyword id="KW-0732">Signal</keyword>
<keyword id="KW-0865">Zymogen</keyword>
<gene>
    <name type="primary">PLAT</name>
</gene>
<sequence length="562" mass="63668">MYALKRELWCVLLLCGAICTSPSQETHRRLRRGVRSYRVTCRDEKTQMIYQQHQSWLRPLLRGNRVEHCWCNDGQTQCHSVPVKSCSEPRCFNGGTCLQAIYFSDFVCQCPVGFIGRQCEIDARATCYEDQGITYRGTWSTTESGAECVNWNTSGLASMPYNGRRPDAVKLGLGNHNYCRNPDKDSKPWCYIFKAEKYSPDFCSTPACTKEKEECYTGKGLDYRGTRSLTMSGAFCLPWNSLVLMGKIYTAWNSNAQTLGLGKHNYCRNPDGDTQPWCHVLKDHKLTWEYCDLPQCVTCGLRQYKEPQFRIKGGLYADITSHPWQAAIFVKNRRSPGERFLCGGILISSCWVLSAAHCFQERFPPHHVRVVLGRTYRLVPGEEEQAFEVEKYIVHKEFDDDTYDNDIALLQLKSDSLTCAQESDAVRTVCLPEANLQLPDWTECELSGYGKHEASSPFYSERLKEAHVRLYPSSRCTSKHLFNKTITNNMLCAGDTRSGGDNANLHDACQGDSGGPLVCMKGNHMTLVGVISWGLGCGQKDVPGVYTKVTNYLNWIRDNTRP</sequence>
<accession>Q8SQ23</accession>
<comment type="function">
    <text evidence="3">Converts the abundant, but inactive, zymogen plasminogen to plasmin by hydrolyzing a single Arg-Val bond in plasminogen. By controlling plasmin-mediated proteolysis, it plays an important role in tissue remodeling and degradation, in cell migration and many other physiopathological events. During oocyte activation, plays a role in cortical granule reaction in the zona reaction, which contributes to the block to polyspermy.</text>
</comment>
<comment type="catalytic activity">
    <reaction>
        <text>Specific cleavage of Arg-|-Val bond in plasminogen to form plasmin.</text>
        <dbReference type="EC" id="3.4.21.68"/>
    </reaction>
</comment>
<comment type="activity regulation">
    <text evidence="2">Inhibited by SERPINA5 (By similarity). Inhibited by SERPINE1 (By similarity).</text>
</comment>
<comment type="subunit">
    <text evidence="1 2">Heterodimer of chain A and chain B held by a disulfide bond. Binds to fibrin with high affinity. This interaction leads to an increase in the catalytic efficiency of the enzyme due to an increase in affinity for plasminogen. Similarly, binding to heparin increases the activation of plasminogen. Binds to annexin A2, cytokeratin-8, fibronectin and laminin. Binds to mannose receptor and the low-density lipoprotein receptor-related protein (LRP1); these proteins are involved in TPA clearance. Binds LRP1B; binding is followed by internalization and degradation. Forms heterodimer with SERPINA5 (By similarity). Interacts with SERPINE1 (By similarity). In complex with SERPINE1, interacts with SORL1 (By similarity).</text>
</comment>
<comment type="subcellular location">
    <subcellularLocation>
        <location evidence="1">Secreted</location>
        <location evidence="1">Extracellular space</location>
    </subcellularLocation>
</comment>
<comment type="domain">
    <text evidence="1">Both FN1 and one of the kringle domains are required for binding to fibrin.</text>
</comment>
<comment type="domain">
    <text evidence="1">Both FN1 and EGF-like domains are important for binding to LRP1.</text>
</comment>
<comment type="domain">
    <text evidence="1">The FN1 domain mediates binding to annexin A2.</text>
</comment>
<comment type="domain">
    <text evidence="1">The second kringle domain is implicated in binding to cytokeratin-8 and to the endothelial cell surface binding site.</text>
</comment>
<comment type="PTM">
    <text evidence="1">The single chain, almost fully active enzyme, can be further processed into a two-chain fully active form by a cleavage after Arg-310 catalyzed by plasmin, tissue kallikrein or factor Xa.</text>
</comment>
<comment type="similarity">
    <text evidence="7">Belongs to the peptidase S1 family.</text>
</comment>
<proteinExistence type="evidence at transcript level"/>
<name>TPA_PIG</name>
<dbReference type="EC" id="3.4.21.68"/>
<dbReference type="EMBL" id="AF364605">
    <property type="protein sequence ID" value="AAM00297.1"/>
    <property type="molecule type" value="mRNA"/>
</dbReference>
<dbReference type="RefSeq" id="NP_999219.1">
    <property type="nucleotide sequence ID" value="NM_214054.1"/>
</dbReference>
<dbReference type="SMR" id="Q8SQ23"/>
<dbReference type="FunCoup" id="Q8SQ23">
    <property type="interactions" value="287"/>
</dbReference>
<dbReference type="STRING" id="9823.ENSSSCP00000007494"/>
<dbReference type="MEROPS" id="S01.232"/>
<dbReference type="GlyCosmos" id="Q8SQ23">
    <property type="glycosylation" value="3 sites, No reported glycans"/>
</dbReference>
<dbReference type="GlyGen" id="Q8SQ23">
    <property type="glycosylation" value="3 sites"/>
</dbReference>
<dbReference type="PaxDb" id="9823-ENSSSCP00000007494"/>
<dbReference type="Ensembl" id="ENSSSCT00025069714.1">
    <property type="protein sequence ID" value="ENSSSCP00025030040.1"/>
    <property type="gene ID" value="ENSSSCG00025050832.1"/>
</dbReference>
<dbReference type="Ensembl" id="ENSSSCT00035092228.1">
    <property type="protein sequence ID" value="ENSSSCP00035038686.1"/>
    <property type="gene ID" value="ENSSSCG00035068081.1"/>
</dbReference>
<dbReference type="Ensembl" id="ENSSSCT00045046551.1">
    <property type="protein sequence ID" value="ENSSSCP00045032313.1"/>
    <property type="gene ID" value="ENSSSCG00045027101.1"/>
</dbReference>
<dbReference type="Ensembl" id="ENSSSCT00070029904.1">
    <property type="protein sequence ID" value="ENSSSCP00070024940.1"/>
    <property type="gene ID" value="ENSSSCG00070015209.1"/>
</dbReference>
<dbReference type="Ensembl" id="ENSSSCT00115020170">
    <property type="protein sequence ID" value="ENSSSCP00115019103"/>
    <property type="gene ID" value="ENSSSCG00115011615"/>
</dbReference>
<dbReference type="Ensembl" id="ENSSSCT00130001473">
    <property type="protein sequence ID" value="ENSSSCP00130001152"/>
    <property type="gene ID" value="ENSSSCG00130000729"/>
</dbReference>
<dbReference type="GeneID" id="397121"/>
<dbReference type="KEGG" id="ssc:397121"/>
<dbReference type="CTD" id="5327"/>
<dbReference type="eggNOG" id="KOG3627">
    <property type="taxonomic scope" value="Eukaryota"/>
</dbReference>
<dbReference type="InParanoid" id="Q8SQ23"/>
<dbReference type="OrthoDB" id="6020543at2759"/>
<dbReference type="Reactome" id="R-SSC-186797">
    <property type="pathway name" value="Signaling by PDGF"/>
</dbReference>
<dbReference type="Reactome" id="R-SSC-75205">
    <property type="pathway name" value="Dissolution of Fibrin Clot"/>
</dbReference>
<dbReference type="Proteomes" id="UP000008227">
    <property type="component" value="Unplaced"/>
</dbReference>
<dbReference type="Proteomes" id="UP000314985">
    <property type="component" value="Chromosome 17"/>
</dbReference>
<dbReference type="Proteomes" id="UP000694570">
    <property type="component" value="Unplaced"/>
</dbReference>
<dbReference type="Proteomes" id="UP000694571">
    <property type="component" value="Unplaced"/>
</dbReference>
<dbReference type="Proteomes" id="UP000694720">
    <property type="component" value="Unplaced"/>
</dbReference>
<dbReference type="Proteomes" id="UP000694722">
    <property type="component" value="Unplaced"/>
</dbReference>
<dbReference type="Proteomes" id="UP000694723">
    <property type="component" value="Unplaced"/>
</dbReference>
<dbReference type="Proteomes" id="UP000694724">
    <property type="component" value="Unplaced"/>
</dbReference>
<dbReference type="Proteomes" id="UP000694725">
    <property type="component" value="Unplaced"/>
</dbReference>
<dbReference type="Proteomes" id="UP000694726">
    <property type="component" value="Unplaced"/>
</dbReference>
<dbReference type="Proteomes" id="UP000694727">
    <property type="component" value="Unplaced"/>
</dbReference>
<dbReference type="Proteomes" id="UP000694728">
    <property type="component" value="Unplaced"/>
</dbReference>
<dbReference type="GO" id="GO:0005615">
    <property type="term" value="C:extracellular space"/>
    <property type="evidence" value="ECO:0000318"/>
    <property type="project" value="GO_Central"/>
</dbReference>
<dbReference type="GO" id="GO:0004252">
    <property type="term" value="F:serine-type endopeptidase activity"/>
    <property type="evidence" value="ECO:0000318"/>
    <property type="project" value="GO_Central"/>
</dbReference>
<dbReference type="GO" id="GO:0031639">
    <property type="term" value="P:plasminogen activation"/>
    <property type="evidence" value="ECO:0000318"/>
    <property type="project" value="GO_Central"/>
</dbReference>
<dbReference type="GO" id="GO:0048008">
    <property type="term" value="P:platelet-derived growth factor receptor signaling pathway"/>
    <property type="evidence" value="ECO:0000318"/>
    <property type="project" value="GO_Central"/>
</dbReference>
<dbReference type="GO" id="GO:0060468">
    <property type="term" value="P:prevention of polyspermy"/>
    <property type="evidence" value="ECO:0000250"/>
    <property type="project" value="UniProtKB"/>
</dbReference>
<dbReference type="GO" id="GO:0014909">
    <property type="term" value="P:smooth muscle cell migration"/>
    <property type="evidence" value="ECO:0000318"/>
    <property type="project" value="GO_Central"/>
</dbReference>
<dbReference type="CDD" id="cd00054">
    <property type="entry name" value="EGF_CA"/>
    <property type="match status" value="1"/>
</dbReference>
<dbReference type="CDD" id="cd00061">
    <property type="entry name" value="FN1"/>
    <property type="match status" value="1"/>
</dbReference>
<dbReference type="CDD" id="cd00108">
    <property type="entry name" value="KR"/>
    <property type="match status" value="2"/>
</dbReference>
<dbReference type="CDD" id="cd00190">
    <property type="entry name" value="Tryp_SPc"/>
    <property type="match status" value="1"/>
</dbReference>
<dbReference type="FunFam" id="2.40.10.10:FF:000054">
    <property type="entry name" value="Complement C1r subcomponent"/>
    <property type="match status" value="1"/>
</dbReference>
<dbReference type="FunFam" id="2.10.70.10:FF:000043">
    <property type="entry name" value="Plasminogen activator"/>
    <property type="match status" value="1"/>
</dbReference>
<dbReference type="FunFam" id="2.10.25.10:FF:000483">
    <property type="entry name" value="Tissue-type plasminogen activator"/>
    <property type="match status" value="1"/>
</dbReference>
<dbReference type="FunFam" id="2.40.10.10:FF:000058">
    <property type="entry name" value="Tissue-type plasminogen activator"/>
    <property type="match status" value="1"/>
</dbReference>
<dbReference type="FunFam" id="2.40.20.10:FF:000001">
    <property type="entry name" value="Urokinase-type plasminogen activator"/>
    <property type="match status" value="2"/>
</dbReference>
<dbReference type="Gene3D" id="2.10.70.10">
    <property type="entry name" value="Complement Module, domain 1"/>
    <property type="match status" value="1"/>
</dbReference>
<dbReference type="Gene3D" id="2.10.25.10">
    <property type="entry name" value="Laminin"/>
    <property type="match status" value="1"/>
</dbReference>
<dbReference type="Gene3D" id="2.40.20.10">
    <property type="entry name" value="Plasminogen Kringle 4"/>
    <property type="match status" value="2"/>
</dbReference>
<dbReference type="Gene3D" id="2.40.10.10">
    <property type="entry name" value="Trypsin-like serine proteases"/>
    <property type="match status" value="2"/>
</dbReference>
<dbReference type="InterPro" id="IPR000742">
    <property type="entry name" value="EGF-like_dom"/>
</dbReference>
<dbReference type="InterPro" id="IPR000083">
    <property type="entry name" value="Fibronectin_type1"/>
</dbReference>
<dbReference type="InterPro" id="IPR000001">
    <property type="entry name" value="Kringle"/>
</dbReference>
<dbReference type="InterPro" id="IPR013806">
    <property type="entry name" value="Kringle-like"/>
</dbReference>
<dbReference type="InterPro" id="IPR018056">
    <property type="entry name" value="Kringle_CS"/>
</dbReference>
<dbReference type="InterPro" id="IPR038178">
    <property type="entry name" value="Kringle_sf"/>
</dbReference>
<dbReference type="InterPro" id="IPR009003">
    <property type="entry name" value="Peptidase_S1_PA"/>
</dbReference>
<dbReference type="InterPro" id="IPR043504">
    <property type="entry name" value="Peptidase_S1_PA_chymotrypsin"/>
</dbReference>
<dbReference type="InterPro" id="IPR001314">
    <property type="entry name" value="Peptidase_S1A"/>
</dbReference>
<dbReference type="InterPro" id="IPR050127">
    <property type="entry name" value="Serine_Proteases_S1"/>
</dbReference>
<dbReference type="InterPro" id="IPR026280">
    <property type="entry name" value="Tissue_plasm_act"/>
</dbReference>
<dbReference type="InterPro" id="IPR001254">
    <property type="entry name" value="Trypsin_dom"/>
</dbReference>
<dbReference type="InterPro" id="IPR018114">
    <property type="entry name" value="TRYPSIN_HIS"/>
</dbReference>
<dbReference type="InterPro" id="IPR033116">
    <property type="entry name" value="TRYPSIN_SER"/>
</dbReference>
<dbReference type="PANTHER" id="PTHR24264:SF42">
    <property type="entry name" value="TISSUE-TYPE PLASMINOGEN ACTIVATOR"/>
    <property type="match status" value="1"/>
</dbReference>
<dbReference type="PANTHER" id="PTHR24264">
    <property type="entry name" value="TRYPSIN-RELATED"/>
    <property type="match status" value="1"/>
</dbReference>
<dbReference type="Pfam" id="PF00008">
    <property type="entry name" value="EGF"/>
    <property type="match status" value="1"/>
</dbReference>
<dbReference type="Pfam" id="PF00039">
    <property type="entry name" value="fn1"/>
    <property type="match status" value="1"/>
</dbReference>
<dbReference type="Pfam" id="PF00051">
    <property type="entry name" value="Kringle"/>
    <property type="match status" value="2"/>
</dbReference>
<dbReference type="Pfam" id="PF00089">
    <property type="entry name" value="Trypsin"/>
    <property type="match status" value="1"/>
</dbReference>
<dbReference type="PIRSF" id="PIRSF001145">
    <property type="entry name" value="Tissue_plasm_act"/>
    <property type="match status" value="1"/>
</dbReference>
<dbReference type="PRINTS" id="PR00722">
    <property type="entry name" value="CHYMOTRYPSIN"/>
</dbReference>
<dbReference type="PRINTS" id="PR00018">
    <property type="entry name" value="KRINGLE"/>
</dbReference>
<dbReference type="SMART" id="SM00181">
    <property type="entry name" value="EGF"/>
    <property type="match status" value="1"/>
</dbReference>
<dbReference type="SMART" id="SM00058">
    <property type="entry name" value="FN1"/>
    <property type="match status" value="1"/>
</dbReference>
<dbReference type="SMART" id="SM00130">
    <property type="entry name" value="KR"/>
    <property type="match status" value="2"/>
</dbReference>
<dbReference type="SMART" id="SM00020">
    <property type="entry name" value="Tryp_SPc"/>
    <property type="match status" value="1"/>
</dbReference>
<dbReference type="SUPFAM" id="SSF57603">
    <property type="entry name" value="FnI-like domain"/>
    <property type="match status" value="1"/>
</dbReference>
<dbReference type="SUPFAM" id="SSF57440">
    <property type="entry name" value="Kringle-like"/>
    <property type="match status" value="2"/>
</dbReference>
<dbReference type="SUPFAM" id="SSF50494">
    <property type="entry name" value="Trypsin-like serine proteases"/>
    <property type="match status" value="1"/>
</dbReference>
<dbReference type="PROSITE" id="PS00022">
    <property type="entry name" value="EGF_1"/>
    <property type="match status" value="1"/>
</dbReference>
<dbReference type="PROSITE" id="PS01186">
    <property type="entry name" value="EGF_2"/>
    <property type="match status" value="1"/>
</dbReference>
<dbReference type="PROSITE" id="PS50026">
    <property type="entry name" value="EGF_3"/>
    <property type="match status" value="1"/>
</dbReference>
<dbReference type="PROSITE" id="PS01253">
    <property type="entry name" value="FN1_1"/>
    <property type="match status" value="1"/>
</dbReference>
<dbReference type="PROSITE" id="PS51091">
    <property type="entry name" value="FN1_2"/>
    <property type="match status" value="1"/>
</dbReference>
<dbReference type="PROSITE" id="PS00021">
    <property type="entry name" value="KRINGLE_1"/>
    <property type="match status" value="2"/>
</dbReference>
<dbReference type="PROSITE" id="PS50070">
    <property type="entry name" value="KRINGLE_2"/>
    <property type="match status" value="2"/>
</dbReference>
<dbReference type="PROSITE" id="PS50240">
    <property type="entry name" value="TRYPSIN_DOM"/>
    <property type="match status" value="1"/>
</dbReference>
<dbReference type="PROSITE" id="PS00134">
    <property type="entry name" value="TRYPSIN_HIS"/>
    <property type="match status" value="1"/>
</dbReference>
<dbReference type="PROSITE" id="PS00135">
    <property type="entry name" value="TRYPSIN_SER"/>
    <property type="match status" value="1"/>
</dbReference>
<reference key="1">
    <citation type="submission" date="2001-03" db="EMBL/GenBank/DDBJ databases">
        <title>T-plasminogen activator in tooth tissues.</title>
        <authorList>
            <person name="Ding Y."/>
            <person name="Xue J."/>
            <person name="Bartlett J.D."/>
        </authorList>
    </citation>
    <scope>NUCLEOTIDE SEQUENCE [MRNA]</scope>
    <source>
        <tissue>Enamel organ</tissue>
    </source>
</reference>
<feature type="signal peptide" evidence="4">
    <location>
        <begin position="1"/>
        <end position="19"/>
    </location>
</feature>
<feature type="propeptide" id="PRO_0000285907" evidence="1">
    <location>
        <begin position="20"/>
        <end position="32"/>
    </location>
</feature>
<feature type="propeptide" id="PRO_0000285908" description="Removed by plasmin" evidence="1">
    <location>
        <begin position="33"/>
        <end position="35"/>
    </location>
</feature>
<feature type="chain" id="PRO_0000285909" description="Tissue-type plasminogen activator">
    <location>
        <begin position="36"/>
        <end position="562"/>
    </location>
</feature>
<feature type="chain" id="PRO_0000285910" description="Tissue-type plasminogen activator chain A" evidence="1">
    <location>
        <begin position="36"/>
        <end position="310"/>
    </location>
</feature>
<feature type="chain" id="PRO_0000285911" description="Tissue-type plasminogen activator chain B" evidence="1">
    <location>
        <begin position="311"/>
        <end position="562"/>
    </location>
</feature>
<feature type="domain" description="Fibronectin type-I" evidence="8">
    <location>
        <begin position="39"/>
        <end position="81"/>
    </location>
</feature>
<feature type="domain" description="EGF-like" evidence="5">
    <location>
        <begin position="82"/>
        <end position="120"/>
    </location>
</feature>
<feature type="domain" description="Kringle 1" evidence="6">
    <location>
        <begin position="126"/>
        <end position="208"/>
    </location>
</feature>
<feature type="domain" description="Kringle 2" evidence="6">
    <location>
        <begin position="214"/>
        <end position="296"/>
    </location>
</feature>
<feature type="domain" description="Peptidase S1" evidence="7">
    <location>
        <begin position="311"/>
        <end position="561"/>
    </location>
</feature>
<feature type="region of interest" description="Important for binding to annexin A2" evidence="1">
    <location>
        <begin position="42"/>
        <end position="52"/>
    </location>
</feature>
<feature type="active site" description="Charge relay system" evidence="1">
    <location>
        <position position="357"/>
    </location>
</feature>
<feature type="active site" description="Charge relay system" evidence="1">
    <location>
        <position position="406"/>
    </location>
</feature>
<feature type="active site" description="Charge relay system" evidence="1">
    <location>
        <position position="513"/>
    </location>
</feature>
<feature type="site" description="Important for binding to LRP1" evidence="1">
    <location>
        <position position="102"/>
    </location>
</feature>
<feature type="site" description="Important for single-chain activity" evidence="1">
    <location>
        <position position="464"/>
    </location>
</feature>
<feature type="site" description="Important for single-chain activity" evidence="1">
    <location>
        <position position="512"/>
    </location>
</feature>
<feature type="glycosylation site" description="O-linked (Fuc) threonine" evidence="1">
    <location>
        <position position="96"/>
    </location>
</feature>
<feature type="glycosylation site" description="N-linked (GlcNAc...) asparagine" evidence="4">
    <location>
        <position position="152"/>
    </location>
</feature>
<feature type="glycosylation site" description="N-linked (GlcNAc...) asparagine" evidence="4">
    <location>
        <position position="483"/>
    </location>
</feature>
<feature type="disulfide bond" evidence="1">
    <location>
        <begin position="41"/>
        <end position="71"/>
    </location>
</feature>
<feature type="disulfide bond" evidence="1">
    <location>
        <begin position="69"/>
        <end position="78"/>
    </location>
</feature>
<feature type="disulfide bond" evidence="1">
    <location>
        <begin position="86"/>
        <end position="97"/>
    </location>
</feature>
<feature type="disulfide bond" evidence="1">
    <location>
        <begin position="91"/>
        <end position="108"/>
    </location>
</feature>
<feature type="disulfide bond" evidence="1">
    <location>
        <begin position="110"/>
        <end position="119"/>
    </location>
</feature>
<feature type="disulfide bond" evidence="1">
    <location>
        <begin position="127"/>
        <end position="208"/>
    </location>
</feature>
<feature type="disulfide bond" evidence="1">
    <location>
        <begin position="148"/>
        <end position="190"/>
    </location>
</feature>
<feature type="disulfide bond" evidence="1">
    <location>
        <begin position="179"/>
        <end position="203"/>
    </location>
</feature>
<feature type="disulfide bond" evidence="1">
    <location>
        <begin position="215"/>
        <end position="296"/>
    </location>
</feature>
<feature type="disulfide bond" evidence="1">
    <location>
        <begin position="236"/>
        <end position="278"/>
    </location>
</feature>
<feature type="disulfide bond" evidence="1">
    <location>
        <begin position="267"/>
        <end position="291"/>
    </location>
</feature>
<feature type="disulfide bond" description="Interchain (between A and B chains)" evidence="5 6 7 8">
    <location>
        <begin position="299"/>
        <end position="430"/>
    </location>
</feature>
<feature type="disulfide bond" evidence="1">
    <location>
        <begin position="342"/>
        <end position="358"/>
    </location>
</feature>
<feature type="disulfide bond" evidence="1">
    <location>
        <begin position="350"/>
        <end position="419"/>
    </location>
</feature>
<feature type="disulfide bond" evidence="1">
    <location>
        <begin position="444"/>
        <end position="519"/>
    </location>
</feature>
<feature type="disulfide bond" evidence="1">
    <location>
        <begin position="476"/>
        <end position="492"/>
    </location>
</feature>
<feature type="disulfide bond" evidence="1">
    <location>
        <begin position="509"/>
        <end position="537"/>
    </location>
</feature>
<evidence type="ECO:0000250" key="1"/>
<evidence type="ECO:0000250" key="2">
    <source>
        <dbReference type="UniProtKB" id="P00750"/>
    </source>
</evidence>
<evidence type="ECO:0000250" key="3">
    <source>
        <dbReference type="UniProtKB" id="P19637"/>
    </source>
</evidence>
<evidence type="ECO:0000255" key="4"/>
<evidence type="ECO:0000255" key="5">
    <source>
        <dbReference type="PROSITE-ProRule" id="PRU00076"/>
    </source>
</evidence>
<evidence type="ECO:0000255" key="6">
    <source>
        <dbReference type="PROSITE-ProRule" id="PRU00121"/>
    </source>
</evidence>
<evidence type="ECO:0000255" key="7">
    <source>
        <dbReference type="PROSITE-ProRule" id="PRU00274"/>
    </source>
</evidence>
<evidence type="ECO:0000255" key="8">
    <source>
        <dbReference type="PROSITE-ProRule" id="PRU00478"/>
    </source>
</evidence>
<organism>
    <name type="scientific">Sus scrofa</name>
    <name type="common">Pig</name>
    <dbReference type="NCBI Taxonomy" id="9823"/>
    <lineage>
        <taxon>Eukaryota</taxon>
        <taxon>Metazoa</taxon>
        <taxon>Chordata</taxon>
        <taxon>Craniata</taxon>
        <taxon>Vertebrata</taxon>
        <taxon>Euteleostomi</taxon>
        <taxon>Mammalia</taxon>
        <taxon>Eutheria</taxon>
        <taxon>Laurasiatheria</taxon>
        <taxon>Artiodactyla</taxon>
        <taxon>Suina</taxon>
        <taxon>Suidae</taxon>
        <taxon>Sus</taxon>
    </lineage>
</organism>
<protein>
    <recommendedName>
        <fullName>Tissue-type plasminogen activator</fullName>
        <shortName>t-PA</shortName>
        <shortName>t-plasminogen activator</shortName>
        <shortName>tPA</shortName>
        <ecNumber>3.4.21.68</ecNumber>
    </recommendedName>
    <component>
        <recommendedName>
            <fullName>Tissue-type plasminogen activator chain A</fullName>
        </recommendedName>
    </component>
    <component>
        <recommendedName>
            <fullName>Tissue-type plasminogen activator chain B</fullName>
        </recommendedName>
    </component>
</protein>